<name>PYRE_THEMA</name>
<accession>Q9WYG6</accession>
<gene>
    <name evidence="1" type="primary">pyrE</name>
    <name type="ordered locus">TM_0331</name>
</gene>
<dbReference type="EC" id="2.4.2.10" evidence="1"/>
<dbReference type="EMBL" id="AE000512">
    <property type="protein sequence ID" value="AAD35418.1"/>
    <property type="molecule type" value="Genomic_DNA"/>
</dbReference>
<dbReference type="PIR" id="E72390">
    <property type="entry name" value="E72390"/>
</dbReference>
<dbReference type="RefSeq" id="NP_228142.1">
    <property type="nucleotide sequence ID" value="NC_000853.1"/>
</dbReference>
<dbReference type="RefSeq" id="WP_004083096.1">
    <property type="nucleotide sequence ID" value="NC_000853.1"/>
</dbReference>
<dbReference type="SMR" id="Q9WYG6"/>
<dbReference type="FunCoup" id="Q9WYG6">
    <property type="interactions" value="162"/>
</dbReference>
<dbReference type="STRING" id="243274.TM_0331"/>
<dbReference type="PaxDb" id="243274-THEMA_03065"/>
<dbReference type="DNASU" id="897282"/>
<dbReference type="EnsemblBacteria" id="AAD35418">
    <property type="protein sequence ID" value="AAD35418"/>
    <property type="gene ID" value="TM_0331"/>
</dbReference>
<dbReference type="KEGG" id="tma:TM0331"/>
<dbReference type="KEGG" id="tmm:Tmari_0329"/>
<dbReference type="KEGG" id="tmw:THMA_0339"/>
<dbReference type="eggNOG" id="COG0461">
    <property type="taxonomic scope" value="Bacteria"/>
</dbReference>
<dbReference type="InParanoid" id="Q9WYG6"/>
<dbReference type="OrthoDB" id="9783570at2"/>
<dbReference type="UniPathway" id="UPA00070">
    <property type="reaction ID" value="UER00119"/>
</dbReference>
<dbReference type="Proteomes" id="UP000008183">
    <property type="component" value="Chromosome"/>
</dbReference>
<dbReference type="GO" id="GO:0000287">
    <property type="term" value="F:magnesium ion binding"/>
    <property type="evidence" value="ECO:0007669"/>
    <property type="project" value="UniProtKB-UniRule"/>
</dbReference>
<dbReference type="GO" id="GO:0004588">
    <property type="term" value="F:orotate phosphoribosyltransferase activity"/>
    <property type="evidence" value="ECO:0000318"/>
    <property type="project" value="GO_Central"/>
</dbReference>
<dbReference type="GO" id="GO:0044205">
    <property type="term" value="P:'de novo' UMP biosynthetic process"/>
    <property type="evidence" value="ECO:0007669"/>
    <property type="project" value="UniProtKB-UniRule"/>
</dbReference>
<dbReference type="GO" id="GO:0019856">
    <property type="term" value="P:pyrimidine nucleobase biosynthetic process"/>
    <property type="evidence" value="ECO:0000318"/>
    <property type="project" value="GO_Central"/>
</dbReference>
<dbReference type="GO" id="GO:0006222">
    <property type="term" value="P:UMP biosynthetic process"/>
    <property type="evidence" value="ECO:0000318"/>
    <property type="project" value="GO_Central"/>
</dbReference>
<dbReference type="CDD" id="cd06223">
    <property type="entry name" value="PRTases_typeI"/>
    <property type="match status" value="1"/>
</dbReference>
<dbReference type="Gene3D" id="3.40.50.2020">
    <property type="match status" value="1"/>
</dbReference>
<dbReference type="HAMAP" id="MF_01208">
    <property type="entry name" value="PyrE"/>
    <property type="match status" value="1"/>
</dbReference>
<dbReference type="InterPro" id="IPR023031">
    <property type="entry name" value="OPRT"/>
</dbReference>
<dbReference type="InterPro" id="IPR006273">
    <property type="entry name" value="Orotate_PRibTrfase_bac"/>
</dbReference>
<dbReference type="InterPro" id="IPR000836">
    <property type="entry name" value="PRibTrfase_dom"/>
</dbReference>
<dbReference type="InterPro" id="IPR029057">
    <property type="entry name" value="PRTase-like"/>
</dbReference>
<dbReference type="NCBIfam" id="TIGR01367">
    <property type="entry name" value="pyrE_Therm"/>
    <property type="match status" value="1"/>
</dbReference>
<dbReference type="PANTHER" id="PTHR19278">
    <property type="entry name" value="OROTATE PHOSPHORIBOSYLTRANSFERASE"/>
    <property type="match status" value="1"/>
</dbReference>
<dbReference type="PANTHER" id="PTHR19278:SF9">
    <property type="entry name" value="URIDINE 5'-MONOPHOSPHATE SYNTHASE"/>
    <property type="match status" value="1"/>
</dbReference>
<dbReference type="Pfam" id="PF00156">
    <property type="entry name" value="Pribosyltran"/>
    <property type="match status" value="1"/>
</dbReference>
<dbReference type="SUPFAM" id="SSF53271">
    <property type="entry name" value="PRTase-like"/>
    <property type="match status" value="1"/>
</dbReference>
<reference key="1">
    <citation type="journal article" date="1999" name="Nature">
        <title>Evidence for lateral gene transfer between Archaea and Bacteria from genome sequence of Thermotoga maritima.</title>
        <authorList>
            <person name="Nelson K.E."/>
            <person name="Clayton R.A."/>
            <person name="Gill S.R."/>
            <person name="Gwinn M.L."/>
            <person name="Dodson R.J."/>
            <person name="Haft D.H."/>
            <person name="Hickey E.K."/>
            <person name="Peterson J.D."/>
            <person name="Nelson W.C."/>
            <person name="Ketchum K.A."/>
            <person name="McDonald L.A."/>
            <person name="Utterback T.R."/>
            <person name="Malek J.A."/>
            <person name="Linher K.D."/>
            <person name="Garrett M.M."/>
            <person name="Stewart A.M."/>
            <person name="Cotton M.D."/>
            <person name="Pratt M.S."/>
            <person name="Phillips C.A."/>
            <person name="Richardson D.L."/>
            <person name="Heidelberg J.F."/>
            <person name="Sutton G.G."/>
            <person name="Fleischmann R.D."/>
            <person name="Eisen J.A."/>
            <person name="White O."/>
            <person name="Salzberg S.L."/>
            <person name="Smith H.O."/>
            <person name="Venter J.C."/>
            <person name="Fraser C.M."/>
        </authorList>
    </citation>
    <scope>NUCLEOTIDE SEQUENCE [LARGE SCALE GENOMIC DNA]</scope>
    <source>
        <strain>ATCC 43589 / DSM 3109 / JCM 10099 / NBRC 100826 / MSB8</strain>
    </source>
</reference>
<sequence length="187" mass="20443">MIKEILEKTGALMEGHFILSSGKHSSRYVQCARLFEFPEYGDVVGEELAKLLKKYDVETVVGPAMGGVILSYVVARYLKARSLFAERENGVMKLRRGFFVKPGEKVAVVEDVVTTGGSVKEVIELLKEYGANVVCVGSIIDRSGGKVDFGVPFESLLKLDLPVYDPEDCPLCKQGIPAEKPGSRGLK</sequence>
<comment type="function">
    <text evidence="1">Catalyzes the transfer of a ribosyl phosphate group from 5-phosphoribose 1-diphosphate to orotate, leading to the formation of orotidine monophosphate (OMP).</text>
</comment>
<comment type="catalytic activity">
    <reaction evidence="1">
        <text>orotidine 5'-phosphate + diphosphate = orotate + 5-phospho-alpha-D-ribose 1-diphosphate</text>
        <dbReference type="Rhea" id="RHEA:10380"/>
        <dbReference type="ChEBI" id="CHEBI:30839"/>
        <dbReference type="ChEBI" id="CHEBI:33019"/>
        <dbReference type="ChEBI" id="CHEBI:57538"/>
        <dbReference type="ChEBI" id="CHEBI:58017"/>
        <dbReference type="EC" id="2.4.2.10"/>
    </reaction>
</comment>
<comment type="cofactor">
    <cofactor evidence="1">
        <name>Mg(2+)</name>
        <dbReference type="ChEBI" id="CHEBI:18420"/>
    </cofactor>
</comment>
<comment type="pathway">
    <text evidence="1">Pyrimidine metabolism; UMP biosynthesis via de novo pathway; UMP from orotate: step 1/2.</text>
</comment>
<comment type="subunit">
    <text evidence="1">Homodimer.</text>
</comment>
<comment type="similarity">
    <text evidence="1">Belongs to the purine/pyrimidine phosphoribosyltransferase family. PyrE subfamily.</text>
</comment>
<proteinExistence type="inferred from homology"/>
<protein>
    <recommendedName>
        <fullName evidence="1">Orotate phosphoribosyltransferase</fullName>
        <shortName evidence="1">OPRT</shortName>
        <shortName evidence="1">OPRTase</shortName>
        <ecNumber evidence="1">2.4.2.10</ecNumber>
    </recommendedName>
</protein>
<evidence type="ECO:0000255" key="1">
    <source>
        <dbReference type="HAMAP-Rule" id="MF_01208"/>
    </source>
</evidence>
<feature type="chain" id="PRO_0000110759" description="Orotate phosphoribosyltransferase">
    <location>
        <begin position="1"/>
        <end position="187"/>
    </location>
</feature>
<feature type="binding site" evidence="1">
    <location>
        <begin position="110"/>
        <end position="118"/>
    </location>
    <ligand>
        <name>5-phospho-alpha-D-ribose 1-diphosphate</name>
        <dbReference type="ChEBI" id="CHEBI:58017"/>
    </ligand>
</feature>
<feature type="binding site" evidence="1">
    <location>
        <position position="114"/>
    </location>
    <ligand>
        <name>orotate</name>
        <dbReference type="ChEBI" id="CHEBI:30839"/>
    </ligand>
</feature>
<feature type="binding site" evidence="1">
    <location>
        <position position="142"/>
    </location>
    <ligand>
        <name>orotate</name>
        <dbReference type="ChEBI" id="CHEBI:30839"/>
    </ligand>
</feature>
<organism>
    <name type="scientific">Thermotoga maritima (strain ATCC 43589 / DSM 3109 / JCM 10099 / NBRC 100826 / MSB8)</name>
    <dbReference type="NCBI Taxonomy" id="243274"/>
    <lineage>
        <taxon>Bacteria</taxon>
        <taxon>Thermotogati</taxon>
        <taxon>Thermotogota</taxon>
        <taxon>Thermotogae</taxon>
        <taxon>Thermotogales</taxon>
        <taxon>Thermotogaceae</taxon>
        <taxon>Thermotoga</taxon>
    </lineage>
</organism>
<keyword id="KW-0328">Glycosyltransferase</keyword>
<keyword id="KW-0460">Magnesium</keyword>
<keyword id="KW-0665">Pyrimidine biosynthesis</keyword>
<keyword id="KW-1185">Reference proteome</keyword>
<keyword id="KW-0808">Transferase</keyword>